<accession>Q04Q98</accession>
<sequence length="250" mass="27633">MNILITNDDGIASSGIKALEAVLQKEHDTFLIAPLRERSATSMALSIYDSMRVERINDNHYIVDGYPADCVNIGLHGDIFPRIDLVLSGINRGVNMGHDIHYSGTVGAARHGAVHSRLSLAVSSGNITKDYDYIREAEFVRHFIDEYSSLLKVGVVYNMNIPFDFVSSMENLRITRLGKRTYEDTYSKKNIIGGIADFYLGGSKLEHATEEGTDFTAFFSGKISLTPLSLDQTDISLVQELSDTLSKSLS</sequence>
<comment type="function">
    <text evidence="1">Nucleotidase that shows phosphatase activity on nucleoside 5'-monophosphates.</text>
</comment>
<comment type="catalytic activity">
    <reaction evidence="1">
        <text>a ribonucleoside 5'-phosphate + H2O = a ribonucleoside + phosphate</text>
        <dbReference type="Rhea" id="RHEA:12484"/>
        <dbReference type="ChEBI" id="CHEBI:15377"/>
        <dbReference type="ChEBI" id="CHEBI:18254"/>
        <dbReference type="ChEBI" id="CHEBI:43474"/>
        <dbReference type="ChEBI" id="CHEBI:58043"/>
        <dbReference type="EC" id="3.1.3.5"/>
    </reaction>
</comment>
<comment type="cofactor">
    <cofactor evidence="1">
        <name>a divalent metal cation</name>
        <dbReference type="ChEBI" id="CHEBI:60240"/>
    </cofactor>
    <text evidence="1">Binds 1 divalent metal cation per subunit.</text>
</comment>
<comment type="subcellular location">
    <subcellularLocation>
        <location evidence="1">Cytoplasm</location>
    </subcellularLocation>
</comment>
<comment type="similarity">
    <text evidence="1">Belongs to the SurE nucleotidase family.</text>
</comment>
<name>SURE_LEPBJ</name>
<dbReference type="EC" id="3.1.3.5" evidence="1"/>
<dbReference type="EMBL" id="CP000350">
    <property type="protein sequence ID" value="ABJ76922.1"/>
    <property type="molecule type" value="Genomic_DNA"/>
</dbReference>
<dbReference type="RefSeq" id="WP_011672006.1">
    <property type="nucleotide sequence ID" value="NC_008510.1"/>
</dbReference>
<dbReference type="SMR" id="Q04Q98"/>
<dbReference type="KEGG" id="lbj:LBJ_2481"/>
<dbReference type="HOGENOM" id="CLU_045192_1_2_12"/>
<dbReference type="Proteomes" id="UP000000656">
    <property type="component" value="Chromosome 1"/>
</dbReference>
<dbReference type="GO" id="GO:0005737">
    <property type="term" value="C:cytoplasm"/>
    <property type="evidence" value="ECO:0007669"/>
    <property type="project" value="UniProtKB-SubCell"/>
</dbReference>
<dbReference type="GO" id="GO:0008254">
    <property type="term" value="F:3'-nucleotidase activity"/>
    <property type="evidence" value="ECO:0007669"/>
    <property type="project" value="TreeGrafter"/>
</dbReference>
<dbReference type="GO" id="GO:0008253">
    <property type="term" value="F:5'-nucleotidase activity"/>
    <property type="evidence" value="ECO:0007669"/>
    <property type="project" value="UniProtKB-UniRule"/>
</dbReference>
<dbReference type="GO" id="GO:0004309">
    <property type="term" value="F:exopolyphosphatase activity"/>
    <property type="evidence" value="ECO:0007669"/>
    <property type="project" value="TreeGrafter"/>
</dbReference>
<dbReference type="GO" id="GO:0046872">
    <property type="term" value="F:metal ion binding"/>
    <property type="evidence" value="ECO:0007669"/>
    <property type="project" value="UniProtKB-UniRule"/>
</dbReference>
<dbReference type="GO" id="GO:0000166">
    <property type="term" value="F:nucleotide binding"/>
    <property type="evidence" value="ECO:0007669"/>
    <property type="project" value="UniProtKB-KW"/>
</dbReference>
<dbReference type="Gene3D" id="3.40.1210.10">
    <property type="entry name" value="Survival protein SurE-like phosphatase/nucleotidase"/>
    <property type="match status" value="1"/>
</dbReference>
<dbReference type="HAMAP" id="MF_00060">
    <property type="entry name" value="SurE"/>
    <property type="match status" value="1"/>
</dbReference>
<dbReference type="InterPro" id="IPR030048">
    <property type="entry name" value="SurE"/>
</dbReference>
<dbReference type="InterPro" id="IPR002828">
    <property type="entry name" value="SurE-like_Pase/nucleotidase"/>
</dbReference>
<dbReference type="InterPro" id="IPR036523">
    <property type="entry name" value="SurE-like_sf"/>
</dbReference>
<dbReference type="NCBIfam" id="TIGR00087">
    <property type="entry name" value="surE"/>
    <property type="match status" value="1"/>
</dbReference>
<dbReference type="PANTHER" id="PTHR30457">
    <property type="entry name" value="5'-NUCLEOTIDASE SURE"/>
    <property type="match status" value="1"/>
</dbReference>
<dbReference type="PANTHER" id="PTHR30457:SF12">
    <property type="entry name" value="5'_3'-NUCLEOTIDASE SURE"/>
    <property type="match status" value="1"/>
</dbReference>
<dbReference type="Pfam" id="PF01975">
    <property type="entry name" value="SurE"/>
    <property type="match status" value="1"/>
</dbReference>
<dbReference type="SUPFAM" id="SSF64167">
    <property type="entry name" value="SurE-like"/>
    <property type="match status" value="1"/>
</dbReference>
<evidence type="ECO:0000255" key="1">
    <source>
        <dbReference type="HAMAP-Rule" id="MF_00060"/>
    </source>
</evidence>
<feature type="chain" id="PRO_1000007745" description="5'-nucleotidase SurE">
    <location>
        <begin position="1"/>
        <end position="250"/>
    </location>
</feature>
<feature type="binding site" evidence="1">
    <location>
        <position position="8"/>
    </location>
    <ligand>
        <name>a divalent metal cation</name>
        <dbReference type="ChEBI" id="CHEBI:60240"/>
    </ligand>
</feature>
<feature type="binding site" evidence="1">
    <location>
        <position position="9"/>
    </location>
    <ligand>
        <name>a divalent metal cation</name>
        <dbReference type="ChEBI" id="CHEBI:60240"/>
    </ligand>
</feature>
<feature type="binding site" evidence="1">
    <location>
        <position position="39"/>
    </location>
    <ligand>
        <name>a divalent metal cation</name>
        <dbReference type="ChEBI" id="CHEBI:60240"/>
    </ligand>
</feature>
<feature type="binding site" evidence="1">
    <location>
        <position position="91"/>
    </location>
    <ligand>
        <name>a divalent metal cation</name>
        <dbReference type="ChEBI" id="CHEBI:60240"/>
    </ligand>
</feature>
<protein>
    <recommendedName>
        <fullName evidence="1">5'-nucleotidase SurE</fullName>
        <ecNumber evidence="1">3.1.3.5</ecNumber>
    </recommendedName>
    <alternativeName>
        <fullName evidence="1">Nucleoside 5'-monophosphate phosphohydrolase</fullName>
    </alternativeName>
</protein>
<keyword id="KW-0963">Cytoplasm</keyword>
<keyword id="KW-0378">Hydrolase</keyword>
<keyword id="KW-0479">Metal-binding</keyword>
<keyword id="KW-0547">Nucleotide-binding</keyword>
<proteinExistence type="inferred from homology"/>
<reference key="1">
    <citation type="journal article" date="2006" name="Proc. Natl. Acad. Sci. U.S.A.">
        <title>Genome reduction in Leptospira borgpetersenii reflects limited transmission potential.</title>
        <authorList>
            <person name="Bulach D.M."/>
            <person name="Zuerner R.L."/>
            <person name="Wilson P."/>
            <person name="Seemann T."/>
            <person name="McGrath A."/>
            <person name="Cullen P.A."/>
            <person name="Davis J."/>
            <person name="Johnson M."/>
            <person name="Kuczek E."/>
            <person name="Alt D.P."/>
            <person name="Peterson-Burch B."/>
            <person name="Coppel R.L."/>
            <person name="Rood J.I."/>
            <person name="Davies J.K."/>
            <person name="Adler B."/>
        </authorList>
    </citation>
    <scope>NUCLEOTIDE SEQUENCE [LARGE SCALE GENOMIC DNA]</scope>
    <source>
        <strain>JB197</strain>
    </source>
</reference>
<gene>
    <name evidence="1" type="primary">surE</name>
    <name type="ordered locus">LBJ_2481</name>
</gene>
<organism>
    <name type="scientific">Leptospira borgpetersenii serovar Hardjo-bovis (strain JB197)</name>
    <dbReference type="NCBI Taxonomy" id="355277"/>
    <lineage>
        <taxon>Bacteria</taxon>
        <taxon>Pseudomonadati</taxon>
        <taxon>Spirochaetota</taxon>
        <taxon>Spirochaetia</taxon>
        <taxon>Leptospirales</taxon>
        <taxon>Leptospiraceae</taxon>
        <taxon>Leptospira</taxon>
    </lineage>
</organism>